<feature type="chain" id="PRO_1000214472" description="DNA-directed RNA polymerase subunit beta">
    <location>
        <begin position="1"/>
        <end position="1168"/>
    </location>
</feature>
<keyword id="KW-0240">DNA-directed RNA polymerase</keyword>
<keyword id="KW-0548">Nucleotidyltransferase</keyword>
<keyword id="KW-1185">Reference proteome</keyword>
<keyword id="KW-0804">Transcription</keyword>
<keyword id="KW-0808">Transferase</keyword>
<dbReference type="EC" id="2.7.7.6" evidence="1"/>
<dbReference type="EMBL" id="CP001620">
    <property type="protein sequence ID" value="ACR18576.1"/>
    <property type="molecule type" value="Genomic_DNA"/>
</dbReference>
<dbReference type="RefSeq" id="WP_012732463.1">
    <property type="nucleotide sequence ID" value="NC_012704.1"/>
</dbReference>
<dbReference type="SMR" id="C4LL71"/>
<dbReference type="STRING" id="645127.ckrop_1858"/>
<dbReference type="KEGG" id="ckp:ckrop_1858"/>
<dbReference type="eggNOG" id="COG0085">
    <property type="taxonomic scope" value="Bacteria"/>
</dbReference>
<dbReference type="HOGENOM" id="CLU_000524_4_1_11"/>
<dbReference type="OrthoDB" id="9803954at2"/>
<dbReference type="Proteomes" id="UP000001473">
    <property type="component" value="Chromosome"/>
</dbReference>
<dbReference type="GO" id="GO:0000428">
    <property type="term" value="C:DNA-directed RNA polymerase complex"/>
    <property type="evidence" value="ECO:0007669"/>
    <property type="project" value="UniProtKB-KW"/>
</dbReference>
<dbReference type="GO" id="GO:0003677">
    <property type="term" value="F:DNA binding"/>
    <property type="evidence" value="ECO:0007669"/>
    <property type="project" value="UniProtKB-UniRule"/>
</dbReference>
<dbReference type="GO" id="GO:0003899">
    <property type="term" value="F:DNA-directed RNA polymerase activity"/>
    <property type="evidence" value="ECO:0007669"/>
    <property type="project" value="UniProtKB-UniRule"/>
</dbReference>
<dbReference type="GO" id="GO:0032549">
    <property type="term" value="F:ribonucleoside binding"/>
    <property type="evidence" value="ECO:0007669"/>
    <property type="project" value="InterPro"/>
</dbReference>
<dbReference type="GO" id="GO:0006351">
    <property type="term" value="P:DNA-templated transcription"/>
    <property type="evidence" value="ECO:0007669"/>
    <property type="project" value="UniProtKB-UniRule"/>
</dbReference>
<dbReference type="CDD" id="cd00653">
    <property type="entry name" value="RNA_pol_B_RPB2"/>
    <property type="match status" value="1"/>
</dbReference>
<dbReference type="Gene3D" id="2.40.50.100">
    <property type="match status" value="1"/>
</dbReference>
<dbReference type="Gene3D" id="2.40.50.150">
    <property type="match status" value="1"/>
</dbReference>
<dbReference type="Gene3D" id="3.90.1100.10">
    <property type="match status" value="1"/>
</dbReference>
<dbReference type="Gene3D" id="2.30.150.10">
    <property type="entry name" value="DNA-directed RNA polymerase, beta subunit, external 1 domain"/>
    <property type="match status" value="1"/>
</dbReference>
<dbReference type="Gene3D" id="2.40.270.10">
    <property type="entry name" value="DNA-directed RNA polymerase, subunit 2, domain 6"/>
    <property type="match status" value="1"/>
</dbReference>
<dbReference type="Gene3D" id="3.90.1800.10">
    <property type="entry name" value="RNA polymerase alpha subunit dimerisation domain"/>
    <property type="match status" value="1"/>
</dbReference>
<dbReference type="Gene3D" id="3.90.1110.10">
    <property type="entry name" value="RNA polymerase Rpb2, domain 2"/>
    <property type="match status" value="1"/>
</dbReference>
<dbReference type="HAMAP" id="MF_01321">
    <property type="entry name" value="RNApol_bact_RpoB"/>
    <property type="match status" value="1"/>
</dbReference>
<dbReference type="InterPro" id="IPR042107">
    <property type="entry name" value="DNA-dir_RNA_pol_bsu_ext_1_sf"/>
</dbReference>
<dbReference type="InterPro" id="IPR019462">
    <property type="entry name" value="DNA-dir_RNA_pol_bsu_external_1"/>
</dbReference>
<dbReference type="InterPro" id="IPR015712">
    <property type="entry name" value="DNA-dir_RNA_pol_su2"/>
</dbReference>
<dbReference type="InterPro" id="IPR007120">
    <property type="entry name" value="DNA-dir_RNAP_su2_dom"/>
</dbReference>
<dbReference type="InterPro" id="IPR037033">
    <property type="entry name" value="DNA-dir_RNAP_su2_hyb_sf"/>
</dbReference>
<dbReference type="InterPro" id="IPR010243">
    <property type="entry name" value="RNA_pol_bsu_bac"/>
</dbReference>
<dbReference type="InterPro" id="IPR007121">
    <property type="entry name" value="RNA_pol_bsu_CS"/>
</dbReference>
<dbReference type="InterPro" id="IPR007644">
    <property type="entry name" value="RNA_pol_bsu_protrusion"/>
</dbReference>
<dbReference type="InterPro" id="IPR007642">
    <property type="entry name" value="RNA_pol_Rpb2_2"/>
</dbReference>
<dbReference type="InterPro" id="IPR037034">
    <property type="entry name" value="RNA_pol_Rpb2_2_sf"/>
</dbReference>
<dbReference type="InterPro" id="IPR007645">
    <property type="entry name" value="RNA_pol_Rpb2_3"/>
</dbReference>
<dbReference type="InterPro" id="IPR007641">
    <property type="entry name" value="RNA_pol_Rpb2_7"/>
</dbReference>
<dbReference type="InterPro" id="IPR014724">
    <property type="entry name" value="RNA_pol_RPB2_OB-fold"/>
</dbReference>
<dbReference type="NCBIfam" id="NF001616">
    <property type="entry name" value="PRK00405.1"/>
    <property type="match status" value="1"/>
</dbReference>
<dbReference type="NCBIfam" id="TIGR02013">
    <property type="entry name" value="rpoB"/>
    <property type="match status" value="1"/>
</dbReference>
<dbReference type="PANTHER" id="PTHR20856">
    <property type="entry name" value="DNA-DIRECTED RNA POLYMERASE I SUBUNIT 2"/>
    <property type="match status" value="1"/>
</dbReference>
<dbReference type="Pfam" id="PF04563">
    <property type="entry name" value="RNA_pol_Rpb2_1"/>
    <property type="match status" value="1"/>
</dbReference>
<dbReference type="Pfam" id="PF04561">
    <property type="entry name" value="RNA_pol_Rpb2_2"/>
    <property type="match status" value="1"/>
</dbReference>
<dbReference type="Pfam" id="PF04565">
    <property type="entry name" value="RNA_pol_Rpb2_3"/>
    <property type="match status" value="1"/>
</dbReference>
<dbReference type="Pfam" id="PF10385">
    <property type="entry name" value="RNA_pol_Rpb2_45"/>
    <property type="match status" value="1"/>
</dbReference>
<dbReference type="Pfam" id="PF00562">
    <property type="entry name" value="RNA_pol_Rpb2_6"/>
    <property type="match status" value="1"/>
</dbReference>
<dbReference type="Pfam" id="PF04560">
    <property type="entry name" value="RNA_pol_Rpb2_7"/>
    <property type="match status" value="1"/>
</dbReference>
<dbReference type="SUPFAM" id="SSF64484">
    <property type="entry name" value="beta and beta-prime subunits of DNA dependent RNA-polymerase"/>
    <property type="match status" value="1"/>
</dbReference>
<dbReference type="PROSITE" id="PS01166">
    <property type="entry name" value="RNA_POL_BETA"/>
    <property type="match status" value="1"/>
</dbReference>
<reference key="1">
    <citation type="journal article" date="2008" name="J. Biotechnol.">
        <title>Ultrafast pyrosequencing of Corynebacterium kroppenstedtii DSM44385 revealed insights into the physiology of a lipophilic corynebacterium that lacks mycolic acids.</title>
        <authorList>
            <person name="Tauch A."/>
            <person name="Schneider J."/>
            <person name="Szczepanowski R."/>
            <person name="Tilker A."/>
            <person name="Viehoever P."/>
            <person name="Gartemann K.-H."/>
            <person name="Arnold W."/>
            <person name="Blom J."/>
            <person name="Brinkrolf K."/>
            <person name="Brune I."/>
            <person name="Goetker S."/>
            <person name="Weisshaar B."/>
            <person name="Goesmann A."/>
            <person name="Droege M."/>
            <person name="Puehler A."/>
        </authorList>
    </citation>
    <scope>NUCLEOTIDE SEQUENCE [LARGE SCALE GENOMIC DNA]</scope>
    <source>
        <strain>DSM 44385 / JCM 11950 / CIP 105744 / CCUG 35717</strain>
    </source>
</reference>
<comment type="function">
    <text evidence="1">DNA-dependent RNA polymerase catalyzes the transcription of DNA into RNA using the four ribonucleoside triphosphates as substrates.</text>
</comment>
<comment type="catalytic activity">
    <reaction evidence="1">
        <text>RNA(n) + a ribonucleoside 5'-triphosphate = RNA(n+1) + diphosphate</text>
        <dbReference type="Rhea" id="RHEA:21248"/>
        <dbReference type="Rhea" id="RHEA-COMP:14527"/>
        <dbReference type="Rhea" id="RHEA-COMP:17342"/>
        <dbReference type="ChEBI" id="CHEBI:33019"/>
        <dbReference type="ChEBI" id="CHEBI:61557"/>
        <dbReference type="ChEBI" id="CHEBI:140395"/>
        <dbReference type="EC" id="2.7.7.6"/>
    </reaction>
</comment>
<comment type="subunit">
    <text evidence="1">The RNAP catalytic core consists of 2 alpha, 1 beta, 1 beta' and 1 omega subunit. When a sigma factor is associated with the core the holoenzyme is formed, which can initiate transcription.</text>
</comment>
<comment type="similarity">
    <text evidence="1">Belongs to the RNA polymerase beta chain family.</text>
</comment>
<gene>
    <name evidence="1" type="primary">rpoB</name>
    <name type="ordered locus">ckrop_1858</name>
</gene>
<proteinExistence type="inferred from homology"/>
<protein>
    <recommendedName>
        <fullName evidence="1">DNA-directed RNA polymerase subunit beta</fullName>
        <shortName evidence="1">RNAP subunit beta</shortName>
        <ecNumber evidence="1">2.7.7.6</ecNumber>
    </recommendedName>
    <alternativeName>
        <fullName evidence="1">RNA polymerase subunit beta</fullName>
    </alternativeName>
    <alternativeName>
        <fullName evidence="1">Transcriptase subunit beta</fullName>
    </alternativeName>
</protein>
<sequence length="1168" mass="129067">MLEGPILAVSRQTSLTSGIPGATKRYSFAKIKEPIEVPGLLDLQRDSFAWLIGAPEWRAKKQAESEEGARITSGLEDILEELSPIEDYSGNMSLTLSEPRFDDVKNTIDEAKDKDINYSAPLYVTAEFTNAMSGEIKSQTVFIGDFPMMTDKGTFIINGTERVIVSQLVRSPGVYFDESIDKSTERPLHSVKVIPSRGAWLEFDIDKRDTVGVRIDRKRRQPVTVLLKALGLSTQDITDRFGFSELMMSTLEHDGVANTDEALLEIYRKQRPGESPTRDSAQALLDNSFFNPKRYDLAKVGRYKVNRKLGLGGGSTTGEHTLTEEDILTTIEYLVRLHAGERTMESPDGTELMIATDDIDHFGNRRLRTVGELVQNQVRVGLSRMERVVRERMTTQDAESITPTSLINVRPVSAAIREFFGTSQLSQFMDQNNSLSGLTHKRRLSALGPGGLSRERAGLDVRDVHASHYGRMCPIETPEGPNIGLIGSLASYARVNPFGFIETPYRRVENGQATDVVDYLTADEEDRHIVAQANTKMDSEGRFVEDTVEVRMKGGNVEVVPASEVDYMDVSPRQMVSVATAMIPFLEHDDANRALMGANMQRQAVPLLRNEAPFVGTGMELRAAHDAGDVVIARRSGVVETVCADFITTLGDDGQRDTFLLRKFERTNQGTCYNQKPLVEAGDRIEEGQALADGPGTENGEMALGRNLLVAFMPWEGHNYEDAIILNQRIVEEDVLTSIHIEEHEIDARDTKLGPEEITRDIPNASEDILADLDERGIVRIGADVRDGDILVGKVTPKGETELTPEERLLRAIFGEKAREVRDTSMKVPHGETGKVIGVRVFSREDDDDLAPGVNQMVRVYVAQKRKIQDGDKLSGRHGNKGVVGKILPAEDMPFLPDGTPVDVILNTHGVPRRMNIGQVLELHLGMLAKSGWKVDPESQDPAIKAMLETLPEDLYDVPADSRVATPVFDGTTNEELSGLMRSSRPNRDGDQMVNEFGKSTLIDGRTGEPFQQPISVGYMYMLKLHHLVDEKIHARSTGPYSMITQQPLGGKAQFGGQRFGEMEVWAMQAYGAAYTLQELLTIKSDDVVGRVKVYEAIVKGDNIPDPGIPESFKVLLKELQSLCLNVEVLSADGTPVDLGADDDDLDQANASLGINLSRDERFDADAV</sequence>
<evidence type="ECO:0000255" key="1">
    <source>
        <dbReference type="HAMAP-Rule" id="MF_01321"/>
    </source>
</evidence>
<name>RPOB_CORK4</name>
<accession>C4LL71</accession>
<organism>
    <name type="scientific">Corynebacterium kroppenstedtii (strain DSM 44385 / JCM 11950 / CIP 105744 / CCUG 35717)</name>
    <dbReference type="NCBI Taxonomy" id="645127"/>
    <lineage>
        <taxon>Bacteria</taxon>
        <taxon>Bacillati</taxon>
        <taxon>Actinomycetota</taxon>
        <taxon>Actinomycetes</taxon>
        <taxon>Mycobacteriales</taxon>
        <taxon>Corynebacteriaceae</taxon>
        <taxon>Corynebacterium</taxon>
    </lineage>
</organism>